<protein>
    <recommendedName>
        <fullName evidence="1">Large ribosomal subunit protein uL2</fullName>
    </recommendedName>
    <alternativeName>
        <fullName evidence="3">50S ribosomal protein L2</fullName>
    </alternativeName>
</protein>
<reference key="1">
    <citation type="submission" date="2008-02" db="EMBL/GenBank/DDBJ databases">
        <title>Complete sequence of chromosome of Methylobacterium sp. 4-46.</title>
        <authorList>
            <consortium name="US DOE Joint Genome Institute"/>
            <person name="Copeland A."/>
            <person name="Lucas S."/>
            <person name="Lapidus A."/>
            <person name="Glavina del Rio T."/>
            <person name="Dalin E."/>
            <person name="Tice H."/>
            <person name="Bruce D."/>
            <person name="Goodwin L."/>
            <person name="Pitluck S."/>
            <person name="Chertkov O."/>
            <person name="Brettin T."/>
            <person name="Detter J.C."/>
            <person name="Han C."/>
            <person name="Kuske C.R."/>
            <person name="Schmutz J."/>
            <person name="Larimer F."/>
            <person name="Land M."/>
            <person name="Hauser L."/>
            <person name="Kyrpides N."/>
            <person name="Ivanova N."/>
            <person name="Marx C.J."/>
            <person name="Richardson P."/>
        </authorList>
    </citation>
    <scope>NUCLEOTIDE SEQUENCE [LARGE SCALE GENOMIC DNA]</scope>
    <source>
        <strain>4-46</strain>
    </source>
</reference>
<comment type="function">
    <text evidence="1">One of the primary rRNA binding proteins. Required for association of the 30S and 50S subunits to form the 70S ribosome, for tRNA binding and peptide bond formation. It has been suggested to have peptidyltransferase activity; this is somewhat controversial. Makes several contacts with the 16S rRNA in the 70S ribosome.</text>
</comment>
<comment type="subunit">
    <text evidence="1">Part of the 50S ribosomal subunit. Forms a bridge to the 30S subunit in the 70S ribosome.</text>
</comment>
<comment type="similarity">
    <text evidence="1">Belongs to the universal ribosomal protein uL2 family.</text>
</comment>
<gene>
    <name evidence="1" type="primary">rplB</name>
    <name type="ordered locus">M446_0350</name>
</gene>
<keyword id="KW-0687">Ribonucleoprotein</keyword>
<keyword id="KW-0689">Ribosomal protein</keyword>
<keyword id="KW-0694">RNA-binding</keyword>
<keyword id="KW-0699">rRNA-binding</keyword>
<accession>B0UHW6</accession>
<feature type="chain" id="PRO_1000141581" description="Large ribosomal subunit protein uL2">
    <location>
        <begin position="1"/>
        <end position="278"/>
    </location>
</feature>
<feature type="region of interest" description="Disordered" evidence="2">
    <location>
        <begin position="223"/>
        <end position="278"/>
    </location>
</feature>
<evidence type="ECO:0000255" key="1">
    <source>
        <dbReference type="HAMAP-Rule" id="MF_01320"/>
    </source>
</evidence>
<evidence type="ECO:0000256" key="2">
    <source>
        <dbReference type="SAM" id="MobiDB-lite"/>
    </source>
</evidence>
<evidence type="ECO:0000305" key="3"/>
<organism>
    <name type="scientific">Methylobacterium sp. (strain 4-46)</name>
    <dbReference type="NCBI Taxonomy" id="426117"/>
    <lineage>
        <taxon>Bacteria</taxon>
        <taxon>Pseudomonadati</taxon>
        <taxon>Pseudomonadota</taxon>
        <taxon>Alphaproteobacteria</taxon>
        <taxon>Hyphomicrobiales</taxon>
        <taxon>Methylobacteriaceae</taxon>
        <taxon>Methylobacterium</taxon>
    </lineage>
</organism>
<proteinExistence type="inferred from homology"/>
<sequence length="278" mass="30344">MALKTFKPVTPSLRQLVIVDRSELYKGKPVKALTEGKISSGGRNNLGRVTVRFRGGGHKRTLRNVDFKRREFAGKVGTVERIEYDPNRTAFIALVSYEGGGQSYILAPQRVKAGDRVVSGEQVDIKPGNAMPIGNMPVGTIVHNVELKIGKGGALARSAGNYAQIVGRDQGYVTLRLNSGEQRLVHGQCYATVGAVSNPDHMNISLGKAGRKRWLGRRPHNRGVAMNPIDHPHGGGEGRTSGGRHPVTPWGFPTKGKKTRSNKRTDTFIVSSRHNRKK</sequence>
<name>RL2_METS4</name>
<dbReference type="EMBL" id="CP000943">
    <property type="protein sequence ID" value="ACA14921.1"/>
    <property type="molecule type" value="Genomic_DNA"/>
</dbReference>
<dbReference type="RefSeq" id="WP_012330339.1">
    <property type="nucleotide sequence ID" value="NC_010511.1"/>
</dbReference>
<dbReference type="SMR" id="B0UHW6"/>
<dbReference type="STRING" id="426117.M446_0350"/>
<dbReference type="KEGG" id="met:M446_0350"/>
<dbReference type="eggNOG" id="COG0090">
    <property type="taxonomic scope" value="Bacteria"/>
</dbReference>
<dbReference type="HOGENOM" id="CLU_036235_2_1_5"/>
<dbReference type="GO" id="GO:0015934">
    <property type="term" value="C:large ribosomal subunit"/>
    <property type="evidence" value="ECO:0007669"/>
    <property type="project" value="InterPro"/>
</dbReference>
<dbReference type="GO" id="GO:0019843">
    <property type="term" value="F:rRNA binding"/>
    <property type="evidence" value="ECO:0007669"/>
    <property type="project" value="UniProtKB-UniRule"/>
</dbReference>
<dbReference type="GO" id="GO:0003735">
    <property type="term" value="F:structural constituent of ribosome"/>
    <property type="evidence" value="ECO:0007669"/>
    <property type="project" value="InterPro"/>
</dbReference>
<dbReference type="GO" id="GO:0016740">
    <property type="term" value="F:transferase activity"/>
    <property type="evidence" value="ECO:0007669"/>
    <property type="project" value="InterPro"/>
</dbReference>
<dbReference type="GO" id="GO:0002181">
    <property type="term" value="P:cytoplasmic translation"/>
    <property type="evidence" value="ECO:0007669"/>
    <property type="project" value="TreeGrafter"/>
</dbReference>
<dbReference type="FunFam" id="2.30.30.30:FF:000055">
    <property type="entry name" value="50S ribosomal protein L2"/>
    <property type="match status" value="1"/>
</dbReference>
<dbReference type="FunFam" id="4.10.950.10:FF:000001">
    <property type="entry name" value="50S ribosomal protein L2"/>
    <property type="match status" value="1"/>
</dbReference>
<dbReference type="Gene3D" id="2.30.30.30">
    <property type="match status" value="1"/>
</dbReference>
<dbReference type="Gene3D" id="2.40.50.140">
    <property type="entry name" value="Nucleic acid-binding proteins"/>
    <property type="match status" value="1"/>
</dbReference>
<dbReference type="Gene3D" id="4.10.950.10">
    <property type="entry name" value="Ribosomal protein L2, domain 3"/>
    <property type="match status" value="1"/>
</dbReference>
<dbReference type="HAMAP" id="MF_01320_B">
    <property type="entry name" value="Ribosomal_uL2_B"/>
    <property type="match status" value="1"/>
</dbReference>
<dbReference type="InterPro" id="IPR012340">
    <property type="entry name" value="NA-bd_OB-fold"/>
</dbReference>
<dbReference type="InterPro" id="IPR014722">
    <property type="entry name" value="Rib_uL2_dom2"/>
</dbReference>
<dbReference type="InterPro" id="IPR002171">
    <property type="entry name" value="Ribosomal_uL2"/>
</dbReference>
<dbReference type="InterPro" id="IPR005880">
    <property type="entry name" value="Ribosomal_uL2_bac/org-type"/>
</dbReference>
<dbReference type="InterPro" id="IPR022669">
    <property type="entry name" value="Ribosomal_uL2_C"/>
</dbReference>
<dbReference type="InterPro" id="IPR022671">
    <property type="entry name" value="Ribosomal_uL2_CS"/>
</dbReference>
<dbReference type="InterPro" id="IPR014726">
    <property type="entry name" value="Ribosomal_uL2_dom3"/>
</dbReference>
<dbReference type="InterPro" id="IPR022666">
    <property type="entry name" value="Ribosomal_uL2_RNA-bd_dom"/>
</dbReference>
<dbReference type="InterPro" id="IPR008991">
    <property type="entry name" value="Translation_prot_SH3-like_sf"/>
</dbReference>
<dbReference type="NCBIfam" id="TIGR01171">
    <property type="entry name" value="rplB_bact"/>
    <property type="match status" value="1"/>
</dbReference>
<dbReference type="PANTHER" id="PTHR13691:SF5">
    <property type="entry name" value="LARGE RIBOSOMAL SUBUNIT PROTEIN UL2M"/>
    <property type="match status" value="1"/>
</dbReference>
<dbReference type="PANTHER" id="PTHR13691">
    <property type="entry name" value="RIBOSOMAL PROTEIN L2"/>
    <property type="match status" value="1"/>
</dbReference>
<dbReference type="Pfam" id="PF00181">
    <property type="entry name" value="Ribosomal_L2"/>
    <property type="match status" value="1"/>
</dbReference>
<dbReference type="Pfam" id="PF03947">
    <property type="entry name" value="Ribosomal_L2_C"/>
    <property type="match status" value="1"/>
</dbReference>
<dbReference type="PIRSF" id="PIRSF002158">
    <property type="entry name" value="Ribosomal_L2"/>
    <property type="match status" value="1"/>
</dbReference>
<dbReference type="SMART" id="SM01383">
    <property type="entry name" value="Ribosomal_L2"/>
    <property type="match status" value="1"/>
</dbReference>
<dbReference type="SMART" id="SM01382">
    <property type="entry name" value="Ribosomal_L2_C"/>
    <property type="match status" value="1"/>
</dbReference>
<dbReference type="SUPFAM" id="SSF50249">
    <property type="entry name" value="Nucleic acid-binding proteins"/>
    <property type="match status" value="1"/>
</dbReference>
<dbReference type="SUPFAM" id="SSF50104">
    <property type="entry name" value="Translation proteins SH3-like domain"/>
    <property type="match status" value="1"/>
</dbReference>
<dbReference type="PROSITE" id="PS00467">
    <property type="entry name" value="RIBOSOMAL_L2"/>
    <property type="match status" value="1"/>
</dbReference>